<accession>O42785</accession>
<protein>
    <recommendedName>
        <fullName>Ras-like protein</fullName>
        <ecNumber evidence="2">3.6.5.2</ecNumber>
    </recommendedName>
    <alternativeName>
        <fullName>Ct-Ras</fullName>
    </alternativeName>
</protein>
<evidence type="ECO:0000250" key="1"/>
<evidence type="ECO:0000250" key="2">
    <source>
        <dbReference type="UniProtKB" id="P01116"/>
    </source>
</evidence>
<evidence type="ECO:0000305" key="3"/>
<comment type="function">
    <text>Ras proteins bind GDP/GTP and possess intrinsic GTPase activity.</text>
</comment>
<comment type="catalytic activity">
    <reaction evidence="2">
        <text>GTP + H2O = GDP + phosphate + H(+)</text>
        <dbReference type="Rhea" id="RHEA:19669"/>
        <dbReference type="ChEBI" id="CHEBI:15377"/>
        <dbReference type="ChEBI" id="CHEBI:15378"/>
        <dbReference type="ChEBI" id="CHEBI:37565"/>
        <dbReference type="ChEBI" id="CHEBI:43474"/>
        <dbReference type="ChEBI" id="CHEBI:58189"/>
        <dbReference type="EC" id="3.6.5.2"/>
    </reaction>
</comment>
<comment type="subcellular location">
    <subcellularLocation>
        <location evidence="3">Cell membrane</location>
        <topology evidence="3">Lipid-anchor</topology>
        <orientation evidence="3">Cytoplasmic side</orientation>
    </subcellularLocation>
</comment>
<comment type="similarity">
    <text evidence="3">Belongs to the small GTPase superfamily. Ras family.</text>
</comment>
<name>RASL_COLTR</name>
<dbReference type="EC" id="3.6.5.2" evidence="2"/>
<dbReference type="EMBL" id="AF044895">
    <property type="protein sequence ID" value="AAC03781.1"/>
    <property type="molecule type" value="mRNA"/>
</dbReference>
<dbReference type="SMR" id="O42785"/>
<dbReference type="GO" id="GO:0005886">
    <property type="term" value="C:plasma membrane"/>
    <property type="evidence" value="ECO:0007669"/>
    <property type="project" value="UniProtKB-SubCell"/>
</dbReference>
<dbReference type="GO" id="GO:0003925">
    <property type="term" value="F:G protein activity"/>
    <property type="evidence" value="ECO:0007669"/>
    <property type="project" value="UniProtKB-EC"/>
</dbReference>
<dbReference type="GO" id="GO:0005525">
    <property type="term" value="F:GTP binding"/>
    <property type="evidence" value="ECO:0007669"/>
    <property type="project" value="UniProtKB-KW"/>
</dbReference>
<dbReference type="GO" id="GO:0007165">
    <property type="term" value="P:signal transduction"/>
    <property type="evidence" value="ECO:0007669"/>
    <property type="project" value="InterPro"/>
</dbReference>
<dbReference type="CDD" id="cd04138">
    <property type="entry name" value="H_N_K_Ras_like"/>
    <property type="match status" value="1"/>
</dbReference>
<dbReference type="FunFam" id="3.40.50.300:FF:000080">
    <property type="entry name" value="Ras-like GTPase Ras1"/>
    <property type="match status" value="1"/>
</dbReference>
<dbReference type="Gene3D" id="3.40.50.300">
    <property type="entry name" value="P-loop containing nucleotide triphosphate hydrolases"/>
    <property type="match status" value="1"/>
</dbReference>
<dbReference type="InterPro" id="IPR027417">
    <property type="entry name" value="P-loop_NTPase"/>
</dbReference>
<dbReference type="InterPro" id="IPR005225">
    <property type="entry name" value="Small_GTP-bd"/>
</dbReference>
<dbReference type="InterPro" id="IPR001806">
    <property type="entry name" value="Small_GTPase"/>
</dbReference>
<dbReference type="InterPro" id="IPR020849">
    <property type="entry name" value="Small_GTPase_Ras-type"/>
</dbReference>
<dbReference type="NCBIfam" id="TIGR00231">
    <property type="entry name" value="small_GTP"/>
    <property type="match status" value="1"/>
</dbReference>
<dbReference type="PANTHER" id="PTHR24070">
    <property type="entry name" value="RAS, DI-RAS, AND RHEB FAMILY MEMBERS OF SMALL GTPASE SUPERFAMILY"/>
    <property type="match status" value="1"/>
</dbReference>
<dbReference type="Pfam" id="PF00071">
    <property type="entry name" value="Ras"/>
    <property type="match status" value="1"/>
</dbReference>
<dbReference type="PRINTS" id="PR00449">
    <property type="entry name" value="RASTRNSFRMNG"/>
</dbReference>
<dbReference type="SMART" id="SM00175">
    <property type="entry name" value="RAB"/>
    <property type="match status" value="1"/>
</dbReference>
<dbReference type="SMART" id="SM00176">
    <property type="entry name" value="RAN"/>
    <property type="match status" value="1"/>
</dbReference>
<dbReference type="SMART" id="SM00173">
    <property type="entry name" value="RAS"/>
    <property type="match status" value="1"/>
</dbReference>
<dbReference type="SMART" id="SM00174">
    <property type="entry name" value="RHO"/>
    <property type="match status" value="1"/>
</dbReference>
<dbReference type="SUPFAM" id="SSF52540">
    <property type="entry name" value="P-loop containing nucleoside triphosphate hydrolases"/>
    <property type="match status" value="1"/>
</dbReference>
<dbReference type="PROSITE" id="PS51421">
    <property type="entry name" value="RAS"/>
    <property type="match status" value="1"/>
</dbReference>
<gene>
    <name type="primary">RAS</name>
</gene>
<sequence length="214" mass="24060">MASKFLREYKLVVVGGGGVGKSCLTIQLIQSHFVDEYDPTIEDSYRKQCVIDEEVALLDVLDTAGQEEYSAMREQYMRTGEGFLLVYSITSRQSFEEITTFQQQILRVKDKDYFPMVVVGNKCDLEGEREVTRQEGEALAKSFGCKFIETSAKSRINVDKAFYDIVREIRRYNREMQGYSTGSGGASGINGPPKPMDVENGEQEAGCCSKCLIM</sequence>
<proteinExistence type="evidence at transcript level"/>
<organism>
    <name type="scientific">Colletotrichum trifolii</name>
    <dbReference type="NCBI Taxonomy" id="5466"/>
    <lineage>
        <taxon>Eukaryota</taxon>
        <taxon>Fungi</taxon>
        <taxon>Dikarya</taxon>
        <taxon>Ascomycota</taxon>
        <taxon>Pezizomycotina</taxon>
        <taxon>Sordariomycetes</taxon>
        <taxon>Hypocreomycetidae</taxon>
        <taxon>Glomerellales</taxon>
        <taxon>Glomerellaceae</taxon>
        <taxon>Colletotrichum</taxon>
        <taxon>Colletotrichum orbiculare species complex</taxon>
    </lineage>
</organism>
<feature type="chain" id="PRO_0000082702" description="Ras-like protein">
    <location>
        <begin position="1"/>
        <end position="211"/>
    </location>
</feature>
<feature type="propeptide" id="PRO_0000281356" description="Removed in mature form" evidence="1">
    <location>
        <begin position="212"/>
        <end position="214"/>
    </location>
</feature>
<feature type="short sequence motif" description="Effector region" evidence="3">
    <location>
        <begin position="37"/>
        <end position="45"/>
    </location>
</feature>
<feature type="binding site" evidence="1">
    <location>
        <begin position="15"/>
        <end position="22"/>
    </location>
    <ligand>
        <name>GTP</name>
        <dbReference type="ChEBI" id="CHEBI:37565"/>
    </ligand>
</feature>
<feature type="binding site" evidence="1">
    <location>
        <begin position="62"/>
        <end position="66"/>
    </location>
    <ligand>
        <name>GTP</name>
        <dbReference type="ChEBI" id="CHEBI:37565"/>
    </ligand>
</feature>
<feature type="binding site" evidence="1">
    <location>
        <begin position="121"/>
        <end position="124"/>
    </location>
    <ligand>
        <name>GTP</name>
        <dbReference type="ChEBI" id="CHEBI:37565"/>
    </ligand>
</feature>
<feature type="modified residue" description="Cysteine methyl ester" evidence="1">
    <location>
        <position position="211"/>
    </location>
</feature>
<feature type="lipid moiety-binding region" description="S-farnesyl cysteine" evidence="1">
    <location>
        <position position="211"/>
    </location>
</feature>
<reference key="1">
    <citation type="journal article" date="1999" name="Mol. Gen. Genet.">
        <title>A Ras protein from a phytopathogenic fungus causes defects in hyphal growth polarity, and induces tumors in mice.</title>
        <authorList>
            <person name="Truesdell G.M."/>
            <person name="Jones C."/>
            <person name="Holt T."/>
            <person name="Henderson G."/>
            <person name="Dickman M.B."/>
        </authorList>
    </citation>
    <scope>NUCLEOTIDE SEQUENCE [MRNA]</scope>
    <source>
        <strain>Race 1</strain>
    </source>
</reference>
<keyword id="KW-1003">Cell membrane</keyword>
<keyword id="KW-0342">GTP-binding</keyword>
<keyword id="KW-0378">Hydrolase</keyword>
<keyword id="KW-0449">Lipoprotein</keyword>
<keyword id="KW-0472">Membrane</keyword>
<keyword id="KW-0488">Methylation</keyword>
<keyword id="KW-0547">Nucleotide-binding</keyword>
<keyword id="KW-0636">Prenylation</keyword>